<proteinExistence type="inferred from homology"/>
<sequence length="244" mass="27992">MSKLDLNALNELPKVDRILALAETNAELEKLDAEGRVAWALDNLPGEYVLSSSFGIQAAVSLHLVNQIRPDIPVILTDTGYLFPETYRFIDELTDKLKLNLKVYRATESAAWQEARYGKLWEQGVEGIEKYNDINKVEPMNRALKELNAQTWFAGLRREQSGSRANLPVLAIQRGVFKVLPIIDWDNRTIYQYLQKHGLKYHPLWDEGYLSVGDTHTTRKWEPGMSEEETRFFGLKRECGLHEG</sequence>
<comment type="function">
    <text evidence="1">Catalyzes the formation of sulfite from phosphoadenosine 5'-phosphosulfate (PAPS) using thioredoxin as an electron donor.</text>
</comment>
<comment type="catalytic activity">
    <reaction evidence="1">
        <text>[thioredoxin]-disulfide + sulfite + adenosine 3',5'-bisphosphate + 2 H(+) = [thioredoxin]-dithiol + 3'-phosphoadenylyl sulfate</text>
        <dbReference type="Rhea" id="RHEA:11724"/>
        <dbReference type="Rhea" id="RHEA-COMP:10698"/>
        <dbReference type="Rhea" id="RHEA-COMP:10700"/>
        <dbReference type="ChEBI" id="CHEBI:15378"/>
        <dbReference type="ChEBI" id="CHEBI:17359"/>
        <dbReference type="ChEBI" id="CHEBI:29950"/>
        <dbReference type="ChEBI" id="CHEBI:50058"/>
        <dbReference type="ChEBI" id="CHEBI:58339"/>
        <dbReference type="ChEBI" id="CHEBI:58343"/>
        <dbReference type="EC" id="1.8.4.8"/>
    </reaction>
</comment>
<comment type="pathway">
    <text evidence="1">Sulfur metabolism; hydrogen sulfide biosynthesis; sulfite from sulfate: step 3/3.</text>
</comment>
<comment type="subcellular location">
    <subcellularLocation>
        <location evidence="1">Cytoplasm</location>
    </subcellularLocation>
</comment>
<comment type="similarity">
    <text evidence="1">Belongs to the PAPS reductase family. CysH subfamily.</text>
</comment>
<name>CYSH_SHIBS</name>
<accession>Q31XM6</accession>
<evidence type="ECO:0000255" key="1">
    <source>
        <dbReference type="HAMAP-Rule" id="MF_00063"/>
    </source>
</evidence>
<protein>
    <recommendedName>
        <fullName evidence="1">Phosphoadenosine 5'-phosphosulfate reductase</fullName>
        <shortName evidence="1">PAPS reductase</shortName>
        <ecNumber evidence="1">1.8.4.8</ecNumber>
    </recommendedName>
    <alternativeName>
        <fullName evidence="1">3'-phosphoadenylylsulfate reductase</fullName>
    </alternativeName>
    <alternativeName>
        <fullName evidence="1">PAPS reductase, thioredoxin dependent</fullName>
    </alternativeName>
    <alternativeName>
        <fullName evidence="1">PAPS sulfotransferase</fullName>
    </alternativeName>
    <alternativeName>
        <fullName evidence="1">PAdoPS reductase</fullName>
    </alternativeName>
</protein>
<dbReference type="EC" id="1.8.4.8" evidence="1"/>
<dbReference type="EMBL" id="CP000036">
    <property type="protein sequence ID" value="ABB67182.1"/>
    <property type="molecule type" value="Genomic_DNA"/>
</dbReference>
<dbReference type="RefSeq" id="WP_000039851.1">
    <property type="nucleotide sequence ID" value="NC_007613.1"/>
</dbReference>
<dbReference type="SMR" id="Q31XM6"/>
<dbReference type="GeneID" id="93779241"/>
<dbReference type="KEGG" id="sbo:SBO_2645"/>
<dbReference type="HOGENOM" id="CLU_044089_3_0_6"/>
<dbReference type="UniPathway" id="UPA00140">
    <property type="reaction ID" value="UER00206"/>
</dbReference>
<dbReference type="Proteomes" id="UP000007067">
    <property type="component" value="Chromosome"/>
</dbReference>
<dbReference type="GO" id="GO:0005737">
    <property type="term" value="C:cytoplasm"/>
    <property type="evidence" value="ECO:0007669"/>
    <property type="project" value="UniProtKB-SubCell"/>
</dbReference>
<dbReference type="GO" id="GO:0004604">
    <property type="term" value="F:phosphoadenylyl-sulfate reductase (thioredoxin) activity"/>
    <property type="evidence" value="ECO:0007669"/>
    <property type="project" value="UniProtKB-UniRule"/>
</dbReference>
<dbReference type="GO" id="GO:0070814">
    <property type="term" value="P:hydrogen sulfide biosynthetic process"/>
    <property type="evidence" value="ECO:0007669"/>
    <property type="project" value="UniProtKB-UniRule"/>
</dbReference>
<dbReference type="GO" id="GO:0019379">
    <property type="term" value="P:sulfate assimilation, phosphoadenylyl sulfate reduction by phosphoadenylyl-sulfate reductase (thioredoxin)"/>
    <property type="evidence" value="ECO:0007669"/>
    <property type="project" value="UniProtKB-UniRule"/>
</dbReference>
<dbReference type="CDD" id="cd23945">
    <property type="entry name" value="PAPS_reductase"/>
    <property type="match status" value="1"/>
</dbReference>
<dbReference type="FunFam" id="3.40.50.620:FF:000043">
    <property type="entry name" value="Phosphoadenosine phosphosulfate reductase"/>
    <property type="match status" value="1"/>
</dbReference>
<dbReference type="Gene3D" id="3.40.50.620">
    <property type="entry name" value="HUPs"/>
    <property type="match status" value="1"/>
</dbReference>
<dbReference type="HAMAP" id="MF_00063">
    <property type="entry name" value="CysH"/>
    <property type="match status" value="1"/>
</dbReference>
<dbReference type="InterPro" id="IPR004511">
    <property type="entry name" value="PAPS/APS_Rdtase"/>
</dbReference>
<dbReference type="InterPro" id="IPR002500">
    <property type="entry name" value="PAPS_reduct_dom"/>
</dbReference>
<dbReference type="InterPro" id="IPR011800">
    <property type="entry name" value="PAPS_reductase_CysH"/>
</dbReference>
<dbReference type="InterPro" id="IPR014729">
    <property type="entry name" value="Rossmann-like_a/b/a_fold"/>
</dbReference>
<dbReference type="NCBIfam" id="TIGR00434">
    <property type="entry name" value="cysH"/>
    <property type="match status" value="1"/>
</dbReference>
<dbReference type="NCBIfam" id="TIGR02057">
    <property type="entry name" value="PAPS_reductase"/>
    <property type="match status" value="1"/>
</dbReference>
<dbReference type="NCBIfam" id="NF002537">
    <property type="entry name" value="PRK02090.1"/>
    <property type="match status" value="1"/>
</dbReference>
<dbReference type="PANTHER" id="PTHR46509">
    <property type="entry name" value="PHOSPHOADENOSINE PHOSPHOSULFATE REDUCTASE"/>
    <property type="match status" value="1"/>
</dbReference>
<dbReference type="PANTHER" id="PTHR46509:SF1">
    <property type="entry name" value="PHOSPHOADENOSINE PHOSPHOSULFATE REDUCTASE"/>
    <property type="match status" value="1"/>
</dbReference>
<dbReference type="Pfam" id="PF01507">
    <property type="entry name" value="PAPS_reduct"/>
    <property type="match status" value="1"/>
</dbReference>
<dbReference type="PIRSF" id="PIRSF000857">
    <property type="entry name" value="PAPS_reductase"/>
    <property type="match status" value="1"/>
</dbReference>
<dbReference type="SUPFAM" id="SSF52402">
    <property type="entry name" value="Adenine nucleotide alpha hydrolases-like"/>
    <property type="match status" value="1"/>
</dbReference>
<gene>
    <name evidence="1" type="primary">cysH</name>
    <name type="ordered locus">SBO_2645</name>
</gene>
<feature type="chain" id="PRO_1000008936" description="Phosphoadenosine 5'-phosphosulfate reductase">
    <location>
        <begin position="1"/>
        <end position="244"/>
    </location>
</feature>
<feature type="active site" description="Nucleophile; cysteine thiosulfonate intermediate" evidence="1">
    <location>
        <position position="239"/>
    </location>
</feature>
<keyword id="KW-0963">Cytoplasm</keyword>
<keyword id="KW-0560">Oxidoreductase</keyword>
<organism>
    <name type="scientific">Shigella boydii serotype 4 (strain Sb227)</name>
    <dbReference type="NCBI Taxonomy" id="300268"/>
    <lineage>
        <taxon>Bacteria</taxon>
        <taxon>Pseudomonadati</taxon>
        <taxon>Pseudomonadota</taxon>
        <taxon>Gammaproteobacteria</taxon>
        <taxon>Enterobacterales</taxon>
        <taxon>Enterobacteriaceae</taxon>
        <taxon>Shigella</taxon>
    </lineage>
</organism>
<reference key="1">
    <citation type="journal article" date="2005" name="Nucleic Acids Res.">
        <title>Genome dynamics and diversity of Shigella species, the etiologic agents of bacillary dysentery.</title>
        <authorList>
            <person name="Yang F."/>
            <person name="Yang J."/>
            <person name="Zhang X."/>
            <person name="Chen L."/>
            <person name="Jiang Y."/>
            <person name="Yan Y."/>
            <person name="Tang X."/>
            <person name="Wang J."/>
            <person name="Xiong Z."/>
            <person name="Dong J."/>
            <person name="Xue Y."/>
            <person name="Zhu Y."/>
            <person name="Xu X."/>
            <person name="Sun L."/>
            <person name="Chen S."/>
            <person name="Nie H."/>
            <person name="Peng J."/>
            <person name="Xu J."/>
            <person name="Wang Y."/>
            <person name="Yuan Z."/>
            <person name="Wen Y."/>
            <person name="Yao Z."/>
            <person name="Shen Y."/>
            <person name="Qiang B."/>
            <person name="Hou Y."/>
            <person name="Yu J."/>
            <person name="Jin Q."/>
        </authorList>
    </citation>
    <scope>NUCLEOTIDE SEQUENCE [LARGE SCALE GENOMIC DNA]</scope>
    <source>
        <strain>Sb227</strain>
    </source>
</reference>